<comment type="function">
    <text evidence="1">Binds directly to 23S ribosomal RNA and is necessary for the in vitro assembly process of the 50S ribosomal subunit. It is not involved in the protein synthesizing functions of that subunit.</text>
</comment>
<comment type="subcellular location">
    <subcellularLocation>
        <location>Plastid</location>
        <location>Chloroplast</location>
    </subcellularLocation>
</comment>
<comment type="similarity">
    <text evidence="1">Belongs to the bacterial ribosomal protein bL20 family.</text>
</comment>
<geneLocation type="chloroplast"/>
<accession>Q06FP4</accession>
<keyword id="KW-0150">Chloroplast</keyword>
<keyword id="KW-0934">Plastid</keyword>
<keyword id="KW-0687">Ribonucleoprotein</keyword>
<keyword id="KW-0689">Ribosomal protein</keyword>
<keyword id="KW-0694">RNA-binding</keyword>
<keyword id="KW-0699">rRNA-binding</keyword>
<proteinExistence type="inferred from homology"/>
<reference key="1">
    <citation type="journal article" date="2006" name="Mol. Biol. Evol.">
        <title>The complete chloroplast genome sequence of Pelargonium x hortorum: organization and evolution of the largest and most highly rearranged chloroplast genome of land plants.</title>
        <authorList>
            <person name="Chumley T.W."/>
            <person name="Palmer J.D."/>
            <person name="Mower J.P."/>
            <person name="Fourcade H.M."/>
            <person name="Calie P.J."/>
            <person name="Boore J.L."/>
            <person name="Jansen R.K."/>
        </authorList>
    </citation>
    <scope>NUCLEOTIDE SEQUENCE [LARGE SCALE GENOMIC DNA]</scope>
    <source>
        <strain>cv. Ringo White</strain>
    </source>
</reference>
<sequence length="126" mass="14673">MTRIKRGSIARRRRAKTRLFASGARGAHSRLTRLIAQQTIRALASAHRDRDKKKRDFRRLWITRINGVIRQNVLSYSYSQLITNLKKEQLLLNRKMLAQIAISNRNCLSIIYSAIIILETKEEGQK</sequence>
<organism>
    <name type="scientific">Pelargonium hortorum</name>
    <name type="common">Common geranium</name>
    <name type="synonym">Pelargonium inquinans x Pelargonium zonale</name>
    <dbReference type="NCBI Taxonomy" id="4031"/>
    <lineage>
        <taxon>Eukaryota</taxon>
        <taxon>Viridiplantae</taxon>
        <taxon>Streptophyta</taxon>
        <taxon>Embryophyta</taxon>
        <taxon>Tracheophyta</taxon>
        <taxon>Spermatophyta</taxon>
        <taxon>Magnoliopsida</taxon>
        <taxon>eudicotyledons</taxon>
        <taxon>Gunneridae</taxon>
        <taxon>Pentapetalae</taxon>
        <taxon>rosids</taxon>
        <taxon>malvids</taxon>
        <taxon>Geraniales</taxon>
        <taxon>Geraniaceae</taxon>
        <taxon>Pelargonium</taxon>
    </lineage>
</organism>
<dbReference type="EMBL" id="DQ897681">
    <property type="protein sequence ID" value="ABI17328.1"/>
    <property type="molecule type" value="Genomic_DNA"/>
</dbReference>
<dbReference type="EMBL" id="DQ897681">
    <property type="protein sequence ID" value="ABI17311.1"/>
    <property type="molecule type" value="Genomic_DNA"/>
</dbReference>
<dbReference type="RefSeq" id="YP_784120.1">
    <property type="nucleotide sequence ID" value="NC_008454.1"/>
</dbReference>
<dbReference type="RefSeq" id="YP_784137.1">
    <property type="nucleotide sequence ID" value="NC_008454.1"/>
</dbReference>
<dbReference type="SMR" id="Q06FP4"/>
<dbReference type="GeneID" id="4362794"/>
<dbReference type="GeneID" id="4362890"/>
<dbReference type="GO" id="GO:0009507">
    <property type="term" value="C:chloroplast"/>
    <property type="evidence" value="ECO:0007669"/>
    <property type="project" value="UniProtKB-SubCell"/>
</dbReference>
<dbReference type="GO" id="GO:1990904">
    <property type="term" value="C:ribonucleoprotein complex"/>
    <property type="evidence" value="ECO:0007669"/>
    <property type="project" value="UniProtKB-KW"/>
</dbReference>
<dbReference type="GO" id="GO:0005840">
    <property type="term" value="C:ribosome"/>
    <property type="evidence" value="ECO:0007669"/>
    <property type="project" value="UniProtKB-KW"/>
</dbReference>
<dbReference type="GO" id="GO:0019843">
    <property type="term" value="F:rRNA binding"/>
    <property type="evidence" value="ECO:0007669"/>
    <property type="project" value="UniProtKB-UniRule"/>
</dbReference>
<dbReference type="GO" id="GO:0003735">
    <property type="term" value="F:structural constituent of ribosome"/>
    <property type="evidence" value="ECO:0007669"/>
    <property type="project" value="InterPro"/>
</dbReference>
<dbReference type="GO" id="GO:0000027">
    <property type="term" value="P:ribosomal large subunit assembly"/>
    <property type="evidence" value="ECO:0007669"/>
    <property type="project" value="UniProtKB-UniRule"/>
</dbReference>
<dbReference type="GO" id="GO:0006412">
    <property type="term" value="P:translation"/>
    <property type="evidence" value="ECO:0007669"/>
    <property type="project" value="InterPro"/>
</dbReference>
<dbReference type="CDD" id="cd07026">
    <property type="entry name" value="Ribosomal_L20"/>
    <property type="match status" value="1"/>
</dbReference>
<dbReference type="FunFam" id="1.10.1900.20:FF:000001">
    <property type="entry name" value="50S ribosomal protein L20"/>
    <property type="match status" value="1"/>
</dbReference>
<dbReference type="Gene3D" id="6.10.160.10">
    <property type="match status" value="1"/>
</dbReference>
<dbReference type="Gene3D" id="1.10.1900.20">
    <property type="entry name" value="Ribosomal protein L20"/>
    <property type="match status" value="1"/>
</dbReference>
<dbReference type="HAMAP" id="MF_00382">
    <property type="entry name" value="Ribosomal_bL20"/>
    <property type="match status" value="1"/>
</dbReference>
<dbReference type="InterPro" id="IPR005813">
    <property type="entry name" value="Ribosomal_bL20"/>
</dbReference>
<dbReference type="InterPro" id="IPR049946">
    <property type="entry name" value="RIBOSOMAL_L20_CS"/>
</dbReference>
<dbReference type="InterPro" id="IPR035566">
    <property type="entry name" value="Ribosomal_protein_bL20_C"/>
</dbReference>
<dbReference type="NCBIfam" id="TIGR01032">
    <property type="entry name" value="rplT_bact"/>
    <property type="match status" value="1"/>
</dbReference>
<dbReference type="PANTHER" id="PTHR10986">
    <property type="entry name" value="39S RIBOSOMAL PROTEIN L20"/>
    <property type="match status" value="1"/>
</dbReference>
<dbReference type="Pfam" id="PF00453">
    <property type="entry name" value="Ribosomal_L20"/>
    <property type="match status" value="1"/>
</dbReference>
<dbReference type="PRINTS" id="PR00062">
    <property type="entry name" value="RIBOSOMALL20"/>
</dbReference>
<dbReference type="SUPFAM" id="SSF74731">
    <property type="entry name" value="Ribosomal protein L20"/>
    <property type="match status" value="1"/>
</dbReference>
<dbReference type="PROSITE" id="PS00937">
    <property type="entry name" value="RIBOSOMAL_L20"/>
    <property type="match status" value="1"/>
</dbReference>
<evidence type="ECO:0000255" key="1">
    <source>
        <dbReference type="HAMAP-Rule" id="MF_00382"/>
    </source>
</evidence>
<evidence type="ECO:0000305" key="2"/>
<protein>
    <recommendedName>
        <fullName evidence="1">Large ribosomal subunit protein bL20c</fullName>
    </recommendedName>
    <alternativeName>
        <fullName evidence="2">50S ribosomal protein L20, chloroplastic</fullName>
    </alternativeName>
</protein>
<feature type="chain" id="PRO_0000276420" description="Large ribosomal subunit protein bL20c">
    <location>
        <begin position="1"/>
        <end position="126"/>
    </location>
</feature>
<name>RK20_PELHO</name>
<gene>
    <name evidence="1" type="primary">rpl20</name>
</gene>